<name>NUDK_YERPP</name>
<feature type="chain" id="PRO_0000342507" description="GDP-mannose pyrophosphatase">
    <location>
        <begin position="1"/>
        <end position="198"/>
    </location>
</feature>
<feature type="domain" description="Nudix hydrolase" evidence="2">
    <location>
        <begin position="43"/>
        <end position="180"/>
    </location>
</feature>
<feature type="short sequence motif" description="Nudix box">
    <location>
        <begin position="86"/>
        <end position="106"/>
    </location>
</feature>
<feature type="binding site" evidence="1">
    <location>
        <begin position="38"/>
        <end position="40"/>
    </location>
    <ligand>
        <name>GDP-alpha-D-mannose</name>
        <dbReference type="ChEBI" id="CHEBI:57527"/>
        <note>ligand shared between dimeric partners</note>
    </ligand>
</feature>
<feature type="binding site" description="in other chain" evidence="1">
    <location>
        <position position="67"/>
    </location>
    <ligand>
        <name>GDP-alpha-D-mannose</name>
        <dbReference type="ChEBI" id="CHEBI:57527"/>
        <note>ligand shared between dimeric partners</note>
    </ligand>
</feature>
<feature type="binding site" description="in other chain" evidence="1">
    <location>
        <begin position="85"/>
        <end position="87"/>
    </location>
    <ligand>
        <name>GDP-alpha-D-mannose</name>
        <dbReference type="ChEBI" id="CHEBI:57527"/>
        <note>ligand shared between dimeric partners</note>
    </ligand>
</feature>
<feature type="binding site" evidence="1">
    <location>
        <position position="85"/>
    </location>
    <ligand>
        <name>Mg(2+)</name>
        <dbReference type="ChEBI" id="CHEBI:18420"/>
        <label>1</label>
    </ligand>
</feature>
<feature type="binding site" evidence="1">
    <location>
        <position position="100"/>
    </location>
    <ligand>
        <name>Mg(2+)</name>
        <dbReference type="ChEBI" id="CHEBI:18420"/>
        <label>2</label>
    </ligand>
</feature>
<feature type="binding site" description="in other chain" evidence="1">
    <location>
        <position position="104"/>
    </location>
    <ligand>
        <name>GDP-alpha-D-mannose</name>
        <dbReference type="ChEBI" id="CHEBI:57527"/>
        <note>ligand shared between dimeric partners</note>
    </ligand>
</feature>
<feature type="binding site" evidence="1">
    <location>
        <position position="104"/>
    </location>
    <ligand>
        <name>Mg(2+)</name>
        <dbReference type="ChEBI" id="CHEBI:18420"/>
        <label>1</label>
    </ligand>
</feature>
<feature type="binding site" evidence="1">
    <location>
        <position position="104"/>
    </location>
    <ligand>
        <name>Mg(2+)</name>
        <dbReference type="ChEBI" id="CHEBI:18420"/>
        <label>2</label>
    </ligand>
</feature>
<feature type="binding site" description="in other chain" evidence="1">
    <location>
        <position position="127"/>
    </location>
    <ligand>
        <name>GDP-alpha-D-mannose</name>
        <dbReference type="ChEBI" id="CHEBI:57527"/>
        <note>ligand shared between dimeric partners</note>
    </ligand>
</feature>
<feature type="binding site" description="in other chain" evidence="1">
    <location>
        <begin position="150"/>
        <end position="151"/>
    </location>
    <ligand>
        <name>GDP-alpha-D-mannose</name>
        <dbReference type="ChEBI" id="CHEBI:57527"/>
        <note>ligand shared between dimeric partners</note>
    </ligand>
</feature>
<feature type="binding site" evidence="1">
    <location>
        <position position="151"/>
    </location>
    <ligand>
        <name>Mg(2+)</name>
        <dbReference type="ChEBI" id="CHEBI:18420"/>
        <label>2</label>
    </ligand>
</feature>
<feature type="binding site" description="in other chain" evidence="1">
    <location>
        <position position="176"/>
    </location>
    <ligand>
        <name>GDP-alpha-D-mannose</name>
        <dbReference type="ChEBI" id="CHEBI:57527"/>
        <note>ligand shared between dimeric partners</note>
    </ligand>
</feature>
<comment type="function">
    <text evidence="1">Nucleoside diphosphate sugar hydrolase that hydrolyzes GDP-mannose as its preferred substrate, yielding GMP and mannose-1-phosphate.</text>
</comment>
<comment type="catalytic activity">
    <reaction evidence="1">
        <text>GDP-alpha-D-mannose + H2O = alpha-D-mannose 1-phosphate + GMP + 2 H(+)</text>
        <dbReference type="Rhea" id="RHEA:27978"/>
        <dbReference type="ChEBI" id="CHEBI:15377"/>
        <dbReference type="ChEBI" id="CHEBI:15378"/>
        <dbReference type="ChEBI" id="CHEBI:57527"/>
        <dbReference type="ChEBI" id="CHEBI:58115"/>
        <dbReference type="ChEBI" id="CHEBI:58409"/>
    </reaction>
</comment>
<comment type="cofactor">
    <cofactor evidence="1">
        <name>Mg(2+)</name>
        <dbReference type="ChEBI" id="CHEBI:18420"/>
    </cofactor>
</comment>
<comment type="subunit">
    <text evidence="1">Homodimer.</text>
</comment>
<comment type="domain">
    <text evidence="1">In the dimer, the N-terminal domains are swapped between the two monomers, such that residues of both chains contribute to the active site.</text>
</comment>
<comment type="similarity">
    <text evidence="3">Belongs to the Nudix hydrolase family. NudK subfamily.</text>
</comment>
<comment type="sequence caution" evidence="3">
    <conflict type="erroneous initiation">
        <sequence resource="EMBL-CDS" id="ABP40517"/>
    </conflict>
</comment>
<accession>A4TMK5</accession>
<evidence type="ECO:0000250" key="1">
    <source>
        <dbReference type="UniProtKB" id="P37128"/>
    </source>
</evidence>
<evidence type="ECO:0000255" key="2">
    <source>
        <dbReference type="PROSITE-ProRule" id="PRU00794"/>
    </source>
</evidence>
<evidence type="ECO:0000305" key="3"/>
<proteinExistence type="inferred from homology"/>
<protein>
    <recommendedName>
        <fullName>GDP-mannose pyrophosphatase</fullName>
        <ecNumber evidence="1">3.6.1.-</ecNumber>
    </recommendedName>
    <alternativeName>
        <fullName>GDP-mannose hydrolase</fullName>
    </alternativeName>
    <alternativeName>
        <fullName>GDPMK</fullName>
    </alternativeName>
</protein>
<gene>
    <name type="primary">nudK</name>
    <name type="ordered locus">YPDSF_2140</name>
</gene>
<dbReference type="EC" id="3.6.1.-" evidence="1"/>
<dbReference type="EMBL" id="CP000668">
    <property type="protein sequence ID" value="ABP40517.1"/>
    <property type="status" value="ALT_INIT"/>
    <property type="molecule type" value="Genomic_DNA"/>
</dbReference>
<dbReference type="RefSeq" id="WP_002208529.1">
    <property type="nucleotide sequence ID" value="NZ_CP009715.1"/>
</dbReference>
<dbReference type="SMR" id="A4TMK5"/>
<dbReference type="GeneID" id="57975667"/>
<dbReference type="KEGG" id="ypp:YPDSF_2140"/>
<dbReference type="PATRIC" id="fig|386656.14.peg.3618"/>
<dbReference type="GO" id="GO:0005829">
    <property type="term" value="C:cytosol"/>
    <property type="evidence" value="ECO:0007669"/>
    <property type="project" value="TreeGrafter"/>
</dbReference>
<dbReference type="GO" id="GO:0016818">
    <property type="term" value="F:hydrolase activity, acting on acid anhydrides, in phosphorus-containing anhydrides"/>
    <property type="evidence" value="ECO:0007669"/>
    <property type="project" value="InterPro"/>
</dbReference>
<dbReference type="GO" id="GO:0046872">
    <property type="term" value="F:metal ion binding"/>
    <property type="evidence" value="ECO:0007669"/>
    <property type="project" value="UniProtKB-KW"/>
</dbReference>
<dbReference type="GO" id="GO:0006753">
    <property type="term" value="P:nucleoside phosphate metabolic process"/>
    <property type="evidence" value="ECO:0007669"/>
    <property type="project" value="TreeGrafter"/>
</dbReference>
<dbReference type="GO" id="GO:0019693">
    <property type="term" value="P:ribose phosphate metabolic process"/>
    <property type="evidence" value="ECO:0007669"/>
    <property type="project" value="TreeGrafter"/>
</dbReference>
<dbReference type="CDD" id="cd24157">
    <property type="entry name" value="NUDIX_GDPMK"/>
    <property type="match status" value="1"/>
</dbReference>
<dbReference type="FunFam" id="3.90.79.10:FF:000010">
    <property type="entry name" value="GDP-mannose pyrophosphatase NudK"/>
    <property type="match status" value="1"/>
</dbReference>
<dbReference type="Gene3D" id="3.90.79.10">
    <property type="entry name" value="Nucleoside Triphosphate Pyrophosphohydrolase"/>
    <property type="match status" value="1"/>
</dbReference>
<dbReference type="InterPro" id="IPR004385">
    <property type="entry name" value="NDP_pyrophosphatase"/>
</dbReference>
<dbReference type="InterPro" id="IPR015797">
    <property type="entry name" value="NUDIX_hydrolase-like_dom_sf"/>
</dbReference>
<dbReference type="InterPro" id="IPR000086">
    <property type="entry name" value="NUDIX_hydrolase_dom"/>
</dbReference>
<dbReference type="NCBIfam" id="TIGR00052">
    <property type="entry name" value="nudix-type nucleoside diphosphatase, YffH/AdpP family"/>
    <property type="match status" value="1"/>
</dbReference>
<dbReference type="NCBIfam" id="NF011585">
    <property type="entry name" value="PRK15009.1"/>
    <property type="match status" value="1"/>
</dbReference>
<dbReference type="PANTHER" id="PTHR11839:SF18">
    <property type="entry name" value="NUDIX HYDROLASE DOMAIN-CONTAINING PROTEIN"/>
    <property type="match status" value="1"/>
</dbReference>
<dbReference type="PANTHER" id="PTHR11839">
    <property type="entry name" value="UDP/ADP-SUGAR PYROPHOSPHATASE"/>
    <property type="match status" value="1"/>
</dbReference>
<dbReference type="Pfam" id="PF00293">
    <property type="entry name" value="NUDIX"/>
    <property type="match status" value="1"/>
</dbReference>
<dbReference type="SUPFAM" id="SSF55811">
    <property type="entry name" value="Nudix"/>
    <property type="match status" value="1"/>
</dbReference>
<dbReference type="PROSITE" id="PS51462">
    <property type="entry name" value="NUDIX"/>
    <property type="match status" value="1"/>
</dbReference>
<sequence>MSVKIENIQCELLSKNWFKLHKYTFDLKTDEGTSVQQIREVYDRGNGATILLYNRQQGTVVLIEQFRMPTYVNGNASGMLLEACAGLLDNDSPEACIRREAMEETGYQVDKVQKLFEAYMSPGGVTELVYFFAAEYHPDQKITDEVGVEDEVIEVVELPFHDALAMVADGRIKDGKTIMLLQYAQIHFFPSSLTPQRC</sequence>
<organism>
    <name type="scientific">Yersinia pestis (strain Pestoides F)</name>
    <dbReference type="NCBI Taxonomy" id="386656"/>
    <lineage>
        <taxon>Bacteria</taxon>
        <taxon>Pseudomonadati</taxon>
        <taxon>Pseudomonadota</taxon>
        <taxon>Gammaproteobacteria</taxon>
        <taxon>Enterobacterales</taxon>
        <taxon>Yersiniaceae</taxon>
        <taxon>Yersinia</taxon>
    </lineage>
</organism>
<keyword id="KW-0378">Hydrolase</keyword>
<keyword id="KW-0460">Magnesium</keyword>
<keyword id="KW-0479">Metal-binding</keyword>
<reference key="1">
    <citation type="submission" date="2007-02" db="EMBL/GenBank/DDBJ databases">
        <title>Complete sequence of chromosome of Yersinia pestis Pestoides F.</title>
        <authorList>
            <consortium name="US DOE Joint Genome Institute"/>
            <person name="Copeland A."/>
            <person name="Lucas S."/>
            <person name="Lapidus A."/>
            <person name="Barry K."/>
            <person name="Detter J.C."/>
            <person name="Glavina del Rio T."/>
            <person name="Hammon N."/>
            <person name="Israni S."/>
            <person name="Dalin E."/>
            <person name="Tice H."/>
            <person name="Pitluck S."/>
            <person name="Di Bartolo G."/>
            <person name="Chain P."/>
            <person name="Malfatti S."/>
            <person name="Shin M."/>
            <person name="Vergez L."/>
            <person name="Schmutz J."/>
            <person name="Larimer F."/>
            <person name="Land M."/>
            <person name="Hauser L."/>
            <person name="Worsham P."/>
            <person name="Chu M."/>
            <person name="Bearden S."/>
            <person name="Garcia E."/>
            <person name="Richardson P."/>
        </authorList>
    </citation>
    <scope>NUCLEOTIDE SEQUENCE [LARGE SCALE GENOMIC DNA]</scope>
    <source>
        <strain>Pestoides F</strain>
    </source>
</reference>